<organism>
    <name type="scientific">Mycobacterium leprae (strain TN)</name>
    <dbReference type="NCBI Taxonomy" id="272631"/>
    <lineage>
        <taxon>Bacteria</taxon>
        <taxon>Bacillati</taxon>
        <taxon>Actinomycetota</taxon>
        <taxon>Actinomycetes</taxon>
        <taxon>Mycobacteriales</taxon>
        <taxon>Mycobacteriaceae</taxon>
        <taxon>Mycobacterium</taxon>
    </lineage>
</organism>
<keyword id="KW-1185">Reference proteome</keyword>
<accession>Q9CBM3</accession>
<sequence>MWCPSVSLSVWANAWLAGKAAPDDLLDALSLWTPMQSVAAYDAVAAGHTGLPWPDIHDAGTVSLLQTLRTAVGRPTKSTPNDPHRLRGTINVVLPVPGDVHGLVTGTQFEHDALAASEAVIITNPHDSSTAVGLVPEYSYSNPEQYTNSEETRLSELSALSWVVYSLPGVPLFDHHELGDAEYALRSAVRSAADALGTIELNSATADITDPRGLVEQLLESSRQHRVPDHAPSRALRVLENAAHVDAIISVSTGLTPIGTHSLSDIEIASNALRPLTAVVRSARMAAVNAILHSAWPD</sequence>
<protein>
    <recommendedName>
        <fullName>Uncharacterized protein ML1804</fullName>
    </recommendedName>
</protein>
<feature type="chain" id="PRO_0000103855" description="Uncharacterized protein ML1804">
    <location>
        <begin position="1"/>
        <end position="298"/>
    </location>
</feature>
<dbReference type="EMBL" id="AL583923">
    <property type="protein sequence ID" value="CAC30757.1"/>
    <property type="molecule type" value="Genomic_DNA"/>
</dbReference>
<dbReference type="PIR" id="E87134">
    <property type="entry name" value="E87134"/>
</dbReference>
<dbReference type="RefSeq" id="NP_302225.1">
    <property type="nucleotide sequence ID" value="NC_002677.1"/>
</dbReference>
<dbReference type="RefSeq" id="WP_010908546.1">
    <property type="nucleotide sequence ID" value="NC_002677.1"/>
</dbReference>
<dbReference type="SMR" id="Q9CBM3"/>
<dbReference type="STRING" id="272631.gene:17575651"/>
<dbReference type="KEGG" id="mle:ML1804"/>
<dbReference type="PATRIC" id="fig|272631.5.peg.3429"/>
<dbReference type="Leproma" id="ML1804"/>
<dbReference type="eggNOG" id="ENOG5032EQ4">
    <property type="taxonomic scope" value="Bacteria"/>
</dbReference>
<dbReference type="HOGENOM" id="CLU_086002_0_0_11"/>
<dbReference type="OrthoDB" id="5188961at2"/>
<dbReference type="Proteomes" id="UP000000806">
    <property type="component" value="Chromosome"/>
</dbReference>
<gene>
    <name type="ordered locus">ML1804</name>
</gene>
<name>Y1804_MYCLE</name>
<comment type="similarity">
    <text evidence="1">To M.tuberculosis Rv1486c, M.bovis Mb1522c and M.avium MAV321.</text>
</comment>
<evidence type="ECO:0000305" key="1"/>
<reference key="1">
    <citation type="journal article" date="2001" name="Nature">
        <title>Massive gene decay in the leprosy bacillus.</title>
        <authorList>
            <person name="Cole S.T."/>
            <person name="Eiglmeier K."/>
            <person name="Parkhill J."/>
            <person name="James K.D."/>
            <person name="Thomson N.R."/>
            <person name="Wheeler P.R."/>
            <person name="Honore N."/>
            <person name="Garnier T."/>
            <person name="Churcher C.M."/>
            <person name="Harris D.E."/>
            <person name="Mungall K.L."/>
            <person name="Basham D."/>
            <person name="Brown D."/>
            <person name="Chillingworth T."/>
            <person name="Connor R."/>
            <person name="Davies R.M."/>
            <person name="Devlin K."/>
            <person name="Duthoy S."/>
            <person name="Feltwell T."/>
            <person name="Fraser A."/>
            <person name="Hamlin N."/>
            <person name="Holroyd S."/>
            <person name="Hornsby T."/>
            <person name="Jagels K."/>
            <person name="Lacroix C."/>
            <person name="Maclean J."/>
            <person name="Moule S."/>
            <person name="Murphy L.D."/>
            <person name="Oliver K."/>
            <person name="Quail M.A."/>
            <person name="Rajandream M.A."/>
            <person name="Rutherford K.M."/>
            <person name="Rutter S."/>
            <person name="Seeger K."/>
            <person name="Simon S."/>
            <person name="Simmonds M."/>
            <person name="Skelton J."/>
            <person name="Squares R."/>
            <person name="Squares S."/>
            <person name="Stevens K."/>
            <person name="Taylor K."/>
            <person name="Whitehead S."/>
            <person name="Woodward J.R."/>
            <person name="Barrell B.G."/>
        </authorList>
    </citation>
    <scope>NUCLEOTIDE SEQUENCE [LARGE SCALE GENOMIC DNA]</scope>
    <source>
        <strain>TN</strain>
    </source>
</reference>
<proteinExistence type="predicted"/>